<protein>
    <recommendedName>
        <fullName>Thrombospondin-1</fullName>
    </recommendedName>
    <alternativeName>
        <fullName evidence="2">Glycoprotein G</fullName>
    </alternativeName>
</protein>
<organism>
    <name type="scientific">Mus musculus</name>
    <name type="common">Mouse</name>
    <dbReference type="NCBI Taxonomy" id="10090"/>
    <lineage>
        <taxon>Eukaryota</taxon>
        <taxon>Metazoa</taxon>
        <taxon>Chordata</taxon>
        <taxon>Craniata</taxon>
        <taxon>Vertebrata</taxon>
        <taxon>Euteleostomi</taxon>
        <taxon>Mammalia</taxon>
        <taxon>Eutheria</taxon>
        <taxon>Euarchontoglires</taxon>
        <taxon>Glires</taxon>
        <taxon>Rodentia</taxon>
        <taxon>Myomorpha</taxon>
        <taxon>Muroidea</taxon>
        <taxon>Muridae</taxon>
        <taxon>Murinae</taxon>
        <taxon>Mus</taxon>
        <taxon>Mus</taxon>
    </lineage>
</organism>
<sequence length="1170" mass="129647">MELLRGLGVLFLLHMCGSNRIPESGGDNGVFDIFELIGGARRGPGRRLVKGQDLSSPAFRIENANLIPAVPDDKFQDLLDAVWADKGFIFLASLRQMKKTRGTLLAVERKDNTGQIFSVVSNGKAGTLDLSLSLPGKQQVVSVEEALLATGQWKSITLFVQEDRAQLYIDCDKMESAELDVPIQSIFTRDLASVARLRVAKGDVNDNFQGVLQNVRFVFGTTPEDILRNKGCSSSTNVLLTLDNNVVNGSSPAIRTNYIGHKTKDLQAICGLSCDELSSMVLELKGLRTIVTTLQDSIRKVTEENRELVSELKRPPLCFHNGVQYKNNEEWTVDSCTECHCQNSVTICKKVSCPIMPCSNATVPDGECCPRCWPSDSADDGWSPWSEWTSCSATCGNGIQQRGRSCDSLNNRCEGSSVQTRTCHIQECDKRFKQDGGWSHWSPWSSCSVTCGDGVITRIRLCNSPSPQMNGKPCEGEARETKACKKDACPINGGWGPWSPWDICSVTCGGGVQRRSRLCNNPTPQFGGKDCVGDVTENQVCNKQDCPIDGCLSNPCFAGAKCTSYPDGSWKCGACPPGYSGNGIQCKDVDECKEVPDACFNHNGEHRCKNTDPGYNCLPCPPRFTGSQPFGRGVEHAMANKQVCKPRNPCTDGTHDCNKNAKCNYLGHYSDPMYRCECKPGYAGNGIICGEDTDLDGWPNENLVCVANATYHCKKDNCPNLPNSGQEDYDKDGIGDACDDDDDNDKIPDDRDNCPFHYNPAQYDYDRDDVGDRCDNCPYNHNPDQADTDKNGEGDACAVDIDGDGILNERDNCQYVYNVDQRDTDMDGVGDQCDNCPLEHNPDQLDSDSDLIGDTCDNNQDIDEDGHQNNLDNCPYVPNANQADHDKDGKGDACDHDDDNDGIPDDRDNCRLVPNPDQKDSDGDGRGDACKDDFDHDNVPDIDDICPENFDISETDFRRFQMIPLDPKGTSQNDPNWVVRHQGKELVQTVNCDPGLAVGYDEFNAVDFSGTFFINTERDDDYAGFVFGYQSSSRFYVVMWKQVTQSYWDTNPTRAQGYSGLSVKVVNSTTGPGEHLRNALWHTGNTPGQVRTLWHDPRHIGWKDFTAYRWRLSHRPKTGYIRVVMYEGKKIMADSGPIYDKTYAGGRLGLFVFSQEMVFFSDMKYECRDS</sequence>
<gene>
    <name type="primary">Thbs1</name>
    <name type="synonym">Tsp1</name>
</gene>
<name>TSP1_MOUSE</name>
<proteinExistence type="evidence at protein level"/>
<accession>P35441</accession>
<evidence type="ECO:0000250" key="1"/>
<evidence type="ECO:0000250" key="2">
    <source>
        <dbReference type="UniProtKB" id="P07996"/>
    </source>
</evidence>
<evidence type="ECO:0000255" key="3"/>
<evidence type="ECO:0000255" key="4">
    <source>
        <dbReference type="PROSITE-ProRule" id="PRU00076"/>
    </source>
</evidence>
<evidence type="ECO:0000255" key="5">
    <source>
        <dbReference type="PROSITE-ProRule" id="PRU00210"/>
    </source>
</evidence>
<evidence type="ECO:0000255" key="6">
    <source>
        <dbReference type="PROSITE-ProRule" id="PRU00220"/>
    </source>
</evidence>
<evidence type="ECO:0000255" key="7">
    <source>
        <dbReference type="PROSITE-ProRule" id="PRU00635"/>
    </source>
</evidence>
<evidence type="ECO:0000256" key="8">
    <source>
        <dbReference type="SAM" id="MobiDB-lite"/>
    </source>
</evidence>
<evidence type="ECO:0000269" key="9">
    <source>
    </source>
</evidence>
<evidence type="ECO:0000269" key="10">
    <source>
    </source>
</evidence>
<evidence type="ECO:0000269" key="11">
    <source>
    </source>
</evidence>
<evidence type="ECO:0000269" key="12">
    <source>
    </source>
</evidence>
<evidence type="ECO:0000269" key="13">
    <source>
    </source>
</evidence>
<evidence type="ECO:0000269" key="14">
    <source>
    </source>
</evidence>
<evidence type="ECO:0000269" key="15">
    <source>
    </source>
</evidence>
<evidence type="ECO:0000269" key="16">
    <source>
    </source>
</evidence>
<evidence type="ECO:0000269" key="17">
    <source>
    </source>
</evidence>
<evidence type="ECO:0000269" key="18">
    <source>
    </source>
</evidence>
<evidence type="ECO:0000269" key="19">
    <source>
    </source>
</evidence>
<evidence type="ECO:0000305" key="20"/>
<feature type="signal peptide" evidence="19">
    <location>
        <begin position="1"/>
        <end position="18"/>
    </location>
</feature>
<feature type="chain" id="PRO_0000035843" description="Thrombospondin-1">
    <location>
        <begin position="19"/>
        <end position="1170"/>
    </location>
</feature>
<feature type="domain" description="Laminin G-like">
    <location>
        <begin position="56"/>
        <end position="270"/>
    </location>
</feature>
<feature type="domain" description="VWFC" evidence="6">
    <location>
        <begin position="316"/>
        <end position="373"/>
    </location>
</feature>
<feature type="domain" description="TSP type-1 1" evidence="5">
    <location>
        <begin position="379"/>
        <end position="429"/>
    </location>
</feature>
<feature type="domain" description="TSP type-1 2" evidence="5">
    <location>
        <begin position="435"/>
        <end position="490"/>
    </location>
</feature>
<feature type="domain" description="TSP type-1 3" evidence="5">
    <location>
        <begin position="492"/>
        <end position="547"/>
    </location>
</feature>
<feature type="domain" description="EGF-like 1" evidence="4">
    <location>
        <begin position="547"/>
        <end position="587"/>
    </location>
</feature>
<feature type="domain" description="EGF-like 2" evidence="4">
    <location>
        <begin position="646"/>
        <end position="690"/>
    </location>
</feature>
<feature type="repeat" description="TSP type-3 1">
    <location>
        <begin position="691"/>
        <end position="726"/>
    </location>
</feature>
<feature type="repeat" description="TSP type-3 2">
    <location>
        <begin position="727"/>
        <end position="762"/>
    </location>
</feature>
<feature type="repeat" description="TSP type-3 3">
    <location>
        <begin position="763"/>
        <end position="785"/>
    </location>
</feature>
<feature type="repeat" description="TSP type-3 4">
    <location>
        <begin position="786"/>
        <end position="821"/>
    </location>
</feature>
<feature type="repeat" description="TSP type-3 5">
    <location>
        <begin position="822"/>
        <end position="844"/>
    </location>
</feature>
<feature type="repeat" description="TSP type-3 6">
    <location>
        <begin position="845"/>
        <end position="882"/>
    </location>
</feature>
<feature type="repeat" description="TSP type-3 7">
    <location>
        <begin position="883"/>
        <end position="918"/>
    </location>
</feature>
<feature type="repeat" description="TSP type-3 8">
    <location>
        <begin position="919"/>
        <end position="954"/>
    </location>
</feature>
<feature type="domain" description="TSP C-terminal" evidence="7">
    <location>
        <begin position="958"/>
        <end position="1170"/>
    </location>
</feature>
<feature type="region of interest" description="Heparin-binding" evidence="1">
    <location>
        <begin position="47"/>
        <end position="95"/>
    </location>
</feature>
<feature type="region of interest" description="Involved in retention in extracellular matrix (ECM); involved in trimer formation" evidence="2">
    <location>
        <begin position="531"/>
        <end position="1152"/>
    </location>
</feature>
<feature type="region of interest" description="Disordered" evidence="8">
    <location>
        <begin position="840"/>
        <end position="934"/>
    </location>
</feature>
<feature type="short sequence motif" description="Cell attachment site" evidence="3">
    <location>
        <begin position="926"/>
        <end position="928"/>
    </location>
</feature>
<feature type="compositionally biased region" description="Basic and acidic residues" evidence="8">
    <location>
        <begin position="883"/>
        <end position="894"/>
    </location>
</feature>
<feature type="compositionally biased region" description="Basic and acidic residues" evidence="8">
    <location>
        <begin position="917"/>
        <end position="934"/>
    </location>
</feature>
<feature type="glycosylation site" description="N-linked (GlcNAc...) asparagine" evidence="3">
    <location>
        <position position="248"/>
    </location>
</feature>
<feature type="glycosylation site" description="N-linked (GlcNAc...) asparagine" evidence="3">
    <location>
        <position position="360"/>
    </location>
</feature>
<feature type="glycosylation site" description="C-linked (Man) tryptophan" evidence="2">
    <location>
        <position position="385"/>
    </location>
</feature>
<feature type="glycosylation site" description="C-linked (Man) tryptophan" evidence="2">
    <location>
        <position position="438"/>
    </location>
</feature>
<feature type="glycosylation site" description="C-linked (Man) tryptophan" evidence="2">
    <location>
        <position position="441"/>
    </location>
</feature>
<feature type="glycosylation site" description="O-linked (Fuc...) threonine" evidence="2">
    <location>
        <position position="450"/>
    </location>
</feature>
<feature type="glycosylation site" description="C-linked (Man) tryptophan" evidence="2">
    <location>
        <position position="498"/>
    </location>
</feature>
<feature type="glycosylation site" description="O-linked (Fuc...) threonine" evidence="2">
    <location>
        <position position="507"/>
    </location>
</feature>
<feature type="glycosylation site" description="O-linked (Xyl) serine" evidence="2">
    <location>
        <position position="553"/>
    </location>
</feature>
<feature type="glycosylation site" description="N-linked (GlcNAc...) asparagine" evidence="3">
    <location>
        <position position="708"/>
    </location>
</feature>
<feature type="glycosylation site" description="N-linked (GlcNAc...) asparagine" evidence="10">
    <location>
        <position position="1067"/>
    </location>
</feature>
<feature type="disulfide bond" evidence="2">
    <location>
        <begin position="171"/>
        <end position="232"/>
    </location>
</feature>
<feature type="disulfide bond" description="Interchain" evidence="20">
    <location>
        <position position="270"/>
    </location>
</feature>
<feature type="disulfide bond" description="Interchain" evidence="20">
    <location>
        <position position="274"/>
    </location>
</feature>
<feature type="disulfide bond" evidence="1">
    <location>
        <begin position="391"/>
        <end position="423"/>
    </location>
</feature>
<feature type="disulfide bond" evidence="1">
    <location>
        <begin position="395"/>
        <end position="428"/>
    </location>
</feature>
<feature type="disulfide bond" evidence="1">
    <location>
        <begin position="406"/>
        <end position="413"/>
    </location>
</feature>
<feature type="disulfide bond" evidence="2">
    <location>
        <begin position="447"/>
        <end position="484"/>
    </location>
</feature>
<feature type="disulfide bond" evidence="2">
    <location>
        <begin position="451"/>
        <end position="489"/>
    </location>
</feature>
<feature type="disulfide bond" evidence="2">
    <location>
        <begin position="462"/>
        <end position="474"/>
    </location>
</feature>
<feature type="disulfide bond" evidence="2">
    <location>
        <begin position="504"/>
        <end position="541"/>
    </location>
</feature>
<feature type="disulfide bond" evidence="2">
    <location>
        <begin position="508"/>
        <end position="546"/>
    </location>
</feature>
<feature type="disulfide bond" evidence="2">
    <location>
        <begin position="519"/>
        <end position="531"/>
    </location>
</feature>
<feature type="disulfide bond" evidence="1">
    <location>
        <begin position="551"/>
        <end position="562"/>
    </location>
</feature>
<feature type="disulfide bond" evidence="1">
    <location>
        <begin position="556"/>
        <end position="572"/>
    </location>
</feature>
<feature type="disulfide bond" evidence="1">
    <location>
        <begin position="575"/>
        <end position="586"/>
    </location>
</feature>
<feature type="disulfide bond" evidence="1">
    <location>
        <begin position="592"/>
        <end position="608"/>
    </location>
</feature>
<feature type="disulfide bond" evidence="1">
    <location>
        <begin position="599"/>
        <end position="617"/>
    </location>
</feature>
<feature type="disulfide bond" evidence="1">
    <location>
        <begin position="620"/>
        <end position="644"/>
    </location>
</feature>
<feature type="disulfide bond" evidence="1">
    <location>
        <begin position="650"/>
        <end position="663"/>
    </location>
</feature>
<feature type="disulfide bond" evidence="1">
    <location>
        <begin position="657"/>
        <end position="676"/>
    </location>
</feature>
<feature type="disulfide bond" evidence="1">
    <location>
        <begin position="678"/>
        <end position="689"/>
    </location>
</feature>
<feature type="disulfide bond" evidence="1">
    <location>
        <begin position="705"/>
        <end position="713"/>
    </location>
</feature>
<feature type="disulfide bond" evidence="1">
    <location>
        <begin position="718"/>
        <end position="738"/>
    </location>
</feature>
<feature type="disulfide bond" evidence="1">
    <location>
        <begin position="754"/>
        <end position="774"/>
    </location>
</feature>
<feature type="disulfide bond" evidence="1">
    <location>
        <begin position="777"/>
        <end position="797"/>
    </location>
</feature>
<feature type="disulfide bond" evidence="1">
    <location>
        <begin position="813"/>
        <end position="833"/>
    </location>
</feature>
<feature type="disulfide bond" evidence="2">
    <location>
        <begin position="836"/>
        <end position="856"/>
    </location>
</feature>
<feature type="disulfide bond" evidence="2">
    <location>
        <begin position="874"/>
        <end position="894"/>
    </location>
</feature>
<feature type="disulfide bond" evidence="2">
    <location>
        <begin position="910"/>
        <end position="930"/>
    </location>
</feature>
<feature type="disulfide bond" evidence="2">
    <location>
        <begin position="946"/>
        <end position="1167"/>
    </location>
</feature>
<feature type="sequence conflict" description="In Ref. 2; AAA53063." evidence="20" ref="2">
    <original>F</original>
    <variation>L</variation>
    <location>
        <position position="1025"/>
    </location>
</feature>
<keyword id="KW-0037">Angiogenesis</keyword>
<keyword id="KW-0053">Apoptosis</keyword>
<keyword id="KW-0106">Calcium</keyword>
<keyword id="KW-0130">Cell adhesion</keyword>
<keyword id="KW-0903">Direct protein sequencing</keyword>
<keyword id="KW-1015">Disulfide bond</keyword>
<keyword id="KW-0245">EGF-like domain</keyword>
<keyword id="KW-0256">Endoplasmic reticulum</keyword>
<keyword id="KW-0272">Extracellular matrix</keyword>
<keyword id="KW-0325">Glycoprotein</keyword>
<keyword id="KW-0358">Heparin-binding</keyword>
<keyword id="KW-0395">Inflammatory response</keyword>
<keyword id="KW-1185">Reference proteome</keyword>
<keyword id="KW-0677">Repeat</keyword>
<keyword id="KW-0703">Sarcoplasmic reticulum</keyword>
<keyword id="KW-0964">Secreted</keyword>
<keyword id="KW-0732">Signal</keyword>
<keyword id="KW-0834">Unfolded protein response</keyword>
<dbReference type="EMBL" id="M62470">
    <property type="protein sequence ID" value="AAA50611.1"/>
    <property type="molecule type" value="Genomic_DNA"/>
</dbReference>
<dbReference type="EMBL" id="M62450">
    <property type="protein sequence ID" value="AAA50611.1"/>
    <property type="status" value="JOINED"/>
    <property type="molecule type" value="Genomic_DNA"/>
</dbReference>
<dbReference type="EMBL" id="M62451">
    <property type="protein sequence ID" value="AAA50611.1"/>
    <property type="status" value="JOINED"/>
    <property type="molecule type" value="Genomic_DNA"/>
</dbReference>
<dbReference type="EMBL" id="M62452">
    <property type="protein sequence ID" value="AAA50611.1"/>
    <property type="status" value="JOINED"/>
    <property type="molecule type" value="Genomic_DNA"/>
</dbReference>
<dbReference type="EMBL" id="M62453">
    <property type="protein sequence ID" value="AAA50611.1"/>
    <property type="status" value="JOINED"/>
    <property type="molecule type" value="Genomic_DNA"/>
</dbReference>
<dbReference type="EMBL" id="M62454">
    <property type="protein sequence ID" value="AAA50611.1"/>
    <property type="status" value="JOINED"/>
    <property type="molecule type" value="Genomic_DNA"/>
</dbReference>
<dbReference type="EMBL" id="M62455">
    <property type="protein sequence ID" value="AAA50611.1"/>
    <property type="status" value="JOINED"/>
    <property type="molecule type" value="Genomic_DNA"/>
</dbReference>
<dbReference type="EMBL" id="M62456">
    <property type="protein sequence ID" value="AAA50611.1"/>
    <property type="status" value="JOINED"/>
    <property type="molecule type" value="Genomic_DNA"/>
</dbReference>
<dbReference type="EMBL" id="M62457">
    <property type="protein sequence ID" value="AAA50611.1"/>
    <property type="status" value="JOINED"/>
    <property type="molecule type" value="Genomic_DNA"/>
</dbReference>
<dbReference type="EMBL" id="M62458">
    <property type="protein sequence ID" value="AAA50611.1"/>
    <property type="status" value="JOINED"/>
    <property type="molecule type" value="Genomic_DNA"/>
</dbReference>
<dbReference type="EMBL" id="M62459">
    <property type="protein sequence ID" value="AAA50611.1"/>
    <property type="status" value="JOINED"/>
    <property type="molecule type" value="Genomic_DNA"/>
</dbReference>
<dbReference type="EMBL" id="M62460">
    <property type="protein sequence ID" value="AAA50611.1"/>
    <property type="status" value="JOINED"/>
    <property type="molecule type" value="Genomic_DNA"/>
</dbReference>
<dbReference type="EMBL" id="M62461">
    <property type="protein sequence ID" value="AAA50611.1"/>
    <property type="status" value="JOINED"/>
    <property type="molecule type" value="Genomic_DNA"/>
</dbReference>
<dbReference type="EMBL" id="M62462">
    <property type="protein sequence ID" value="AAA50611.1"/>
    <property type="status" value="JOINED"/>
    <property type="molecule type" value="Genomic_DNA"/>
</dbReference>
<dbReference type="EMBL" id="M62463">
    <property type="protein sequence ID" value="AAA50611.1"/>
    <property type="status" value="JOINED"/>
    <property type="molecule type" value="Genomic_DNA"/>
</dbReference>
<dbReference type="EMBL" id="M62464">
    <property type="protein sequence ID" value="AAA50611.1"/>
    <property type="status" value="JOINED"/>
    <property type="molecule type" value="Genomic_DNA"/>
</dbReference>
<dbReference type="EMBL" id="M62465">
    <property type="protein sequence ID" value="AAA50611.1"/>
    <property type="status" value="JOINED"/>
    <property type="molecule type" value="Genomic_DNA"/>
</dbReference>
<dbReference type="EMBL" id="M62466">
    <property type="protein sequence ID" value="AAA50611.1"/>
    <property type="status" value="JOINED"/>
    <property type="molecule type" value="Genomic_DNA"/>
</dbReference>
<dbReference type="EMBL" id="M62467">
    <property type="protein sequence ID" value="AAA50611.1"/>
    <property type="status" value="JOINED"/>
    <property type="molecule type" value="Genomic_DNA"/>
</dbReference>
<dbReference type="EMBL" id="M62468">
    <property type="protein sequence ID" value="AAA50611.1"/>
    <property type="status" value="JOINED"/>
    <property type="molecule type" value="Genomic_DNA"/>
</dbReference>
<dbReference type="EMBL" id="M62469">
    <property type="protein sequence ID" value="AAA50611.1"/>
    <property type="status" value="JOINED"/>
    <property type="molecule type" value="Genomic_DNA"/>
</dbReference>
<dbReference type="EMBL" id="M87276">
    <property type="protein sequence ID" value="AAA53063.1"/>
    <property type="molecule type" value="mRNA"/>
</dbReference>
<dbReference type="EMBL" id="J05606">
    <property type="protein sequence ID" value="AAA40431.1"/>
    <property type="molecule type" value="Genomic_DNA"/>
</dbReference>
<dbReference type="EMBL" id="J05605">
    <property type="protein sequence ID" value="AAA40431.1"/>
    <property type="status" value="JOINED"/>
    <property type="molecule type" value="Genomic_DNA"/>
</dbReference>
<dbReference type="PIR" id="A40558">
    <property type="entry name" value="A40558"/>
</dbReference>
<dbReference type="SMR" id="P35441"/>
<dbReference type="ComplexPortal" id="CPX-3022">
    <property type="entry name" value="Thrombospondin 1 complex"/>
</dbReference>
<dbReference type="CORUM" id="P35441"/>
<dbReference type="FunCoup" id="P35441">
    <property type="interactions" value="414"/>
</dbReference>
<dbReference type="IntAct" id="P35441">
    <property type="interactions" value="6"/>
</dbReference>
<dbReference type="MINT" id="P35441"/>
<dbReference type="STRING" id="10090.ENSMUSP00000044903"/>
<dbReference type="GlyConnect" id="667">
    <property type="glycosylation" value="1 N-Linked glycan (1 site)"/>
</dbReference>
<dbReference type="GlyCosmos" id="P35441">
    <property type="glycosylation" value="4 sites, 2 glycans"/>
</dbReference>
<dbReference type="GlyGen" id="P35441">
    <property type="glycosylation" value="11 sites, 4 N-linked glycans (2 sites), 1 O-linked glycan (1 site)"/>
</dbReference>
<dbReference type="iPTMnet" id="P35441"/>
<dbReference type="PhosphoSitePlus" id="P35441"/>
<dbReference type="SwissPalm" id="P35441"/>
<dbReference type="CPTAC" id="non-CPTAC-3360"/>
<dbReference type="jPOST" id="P35441"/>
<dbReference type="PaxDb" id="10090-ENSMUSP00000044903"/>
<dbReference type="PeptideAtlas" id="P35441"/>
<dbReference type="ProteomicsDB" id="297728"/>
<dbReference type="Pumba" id="P35441"/>
<dbReference type="AGR" id="MGI:98737"/>
<dbReference type="MGI" id="MGI:98737">
    <property type="gene designation" value="Thbs1"/>
</dbReference>
<dbReference type="eggNOG" id="ENOG502QRK8">
    <property type="taxonomic scope" value="Eukaryota"/>
</dbReference>
<dbReference type="InParanoid" id="P35441"/>
<dbReference type="Reactome" id="R-MMU-114608">
    <property type="pathway name" value="Platelet degranulation"/>
</dbReference>
<dbReference type="Reactome" id="R-MMU-186797">
    <property type="pathway name" value="Signaling by PDGF"/>
</dbReference>
<dbReference type="Reactome" id="R-MMU-216083">
    <property type="pathway name" value="Integrin cell surface interactions"/>
</dbReference>
<dbReference type="Reactome" id="R-MMU-5173214">
    <property type="pathway name" value="O-glycosylation of TSR domain-containing proteins"/>
</dbReference>
<dbReference type="ChiTaRS" id="Thbs1">
    <property type="organism name" value="mouse"/>
</dbReference>
<dbReference type="PRO" id="PR:P35441"/>
<dbReference type="Proteomes" id="UP000000589">
    <property type="component" value="Unplaced"/>
</dbReference>
<dbReference type="RNAct" id="P35441">
    <property type="molecule type" value="protein"/>
</dbReference>
<dbReference type="GO" id="GO:0009986">
    <property type="term" value="C:cell surface"/>
    <property type="evidence" value="ECO:0007669"/>
    <property type="project" value="UniProtKB-SubCell"/>
</dbReference>
<dbReference type="GO" id="GO:0062023">
    <property type="term" value="C:collagen-containing extracellular matrix"/>
    <property type="evidence" value="ECO:0007005"/>
    <property type="project" value="UniProtKB"/>
</dbReference>
<dbReference type="GO" id="GO:0005783">
    <property type="term" value="C:endoplasmic reticulum"/>
    <property type="evidence" value="ECO:0000314"/>
    <property type="project" value="UniProtKB"/>
</dbReference>
<dbReference type="GO" id="GO:0031012">
    <property type="term" value="C:extracellular matrix"/>
    <property type="evidence" value="ECO:0000314"/>
    <property type="project" value="UniProtKB"/>
</dbReference>
<dbReference type="GO" id="GO:0005576">
    <property type="term" value="C:extracellular region"/>
    <property type="evidence" value="ECO:0000250"/>
    <property type="project" value="MGI"/>
</dbReference>
<dbReference type="GO" id="GO:0005615">
    <property type="term" value="C:extracellular space"/>
    <property type="evidence" value="ECO:0000314"/>
    <property type="project" value="MGI"/>
</dbReference>
<dbReference type="GO" id="GO:0016529">
    <property type="term" value="C:sarcoplasmic reticulum"/>
    <property type="evidence" value="ECO:0000314"/>
    <property type="project" value="UniProtKB"/>
</dbReference>
<dbReference type="GO" id="GO:0005509">
    <property type="term" value="F:calcium ion binding"/>
    <property type="evidence" value="ECO:0007669"/>
    <property type="project" value="InterPro"/>
</dbReference>
<dbReference type="GO" id="GO:0050840">
    <property type="term" value="F:extracellular matrix binding"/>
    <property type="evidence" value="ECO:0000314"/>
    <property type="project" value="MGI"/>
</dbReference>
<dbReference type="GO" id="GO:0001968">
    <property type="term" value="F:fibronectin binding"/>
    <property type="evidence" value="ECO:0000250"/>
    <property type="project" value="UniProtKB"/>
</dbReference>
<dbReference type="GO" id="GO:0008201">
    <property type="term" value="F:heparin binding"/>
    <property type="evidence" value="ECO:0000266"/>
    <property type="project" value="MGI"/>
</dbReference>
<dbReference type="GO" id="GO:0001525">
    <property type="term" value="P:angiogenesis"/>
    <property type="evidence" value="ECO:0007669"/>
    <property type="project" value="UniProtKB-KW"/>
</dbReference>
<dbReference type="GO" id="GO:0006915">
    <property type="term" value="P:apoptotic process"/>
    <property type="evidence" value="ECO:0007669"/>
    <property type="project" value="UniProtKB-KW"/>
</dbReference>
<dbReference type="GO" id="GO:0048266">
    <property type="term" value="P:behavioral response to pain"/>
    <property type="evidence" value="ECO:0000315"/>
    <property type="project" value="UniProtKB"/>
</dbReference>
<dbReference type="GO" id="GO:0048514">
    <property type="term" value="P:blood vessel morphogenesis"/>
    <property type="evidence" value="ECO:0000316"/>
    <property type="project" value="MGI"/>
</dbReference>
<dbReference type="GO" id="GO:0071732">
    <property type="term" value="P:cellular response to nitric oxide"/>
    <property type="evidence" value="ECO:0000315"/>
    <property type="project" value="MGI"/>
</dbReference>
<dbReference type="GO" id="GO:0003197">
    <property type="term" value="P:endocardial cushion development"/>
    <property type="evidence" value="ECO:0000316"/>
    <property type="project" value="MGI"/>
</dbReference>
<dbReference type="GO" id="GO:0003417">
    <property type="term" value="P:growth plate cartilage development"/>
    <property type="evidence" value="ECO:0000315"/>
    <property type="project" value="MGI"/>
</dbReference>
<dbReference type="GO" id="GO:0006954">
    <property type="term" value="P:inflammatory response"/>
    <property type="evidence" value="ECO:0000315"/>
    <property type="project" value="MGI"/>
</dbReference>
<dbReference type="GO" id="GO:0070487">
    <property type="term" value="P:monocyte aggregation"/>
    <property type="evidence" value="ECO:0000315"/>
    <property type="project" value="MGI"/>
</dbReference>
<dbReference type="GO" id="GO:0016525">
    <property type="term" value="P:negative regulation of angiogenesis"/>
    <property type="evidence" value="ECO:0000314"/>
    <property type="project" value="MGI"/>
</dbReference>
<dbReference type="GO" id="GO:0001953">
    <property type="term" value="P:negative regulation of cell-matrix adhesion"/>
    <property type="evidence" value="ECO:0000266"/>
    <property type="project" value="MGI"/>
</dbReference>
<dbReference type="GO" id="GO:2001027">
    <property type="term" value="P:negative regulation of endothelial cell chemotaxis"/>
    <property type="evidence" value="ECO:0000266"/>
    <property type="project" value="MGI"/>
</dbReference>
<dbReference type="GO" id="GO:0001937">
    <property type="term" value="P:negative regulation of endothelial cell proliferation"/>
    <property type="evidence" value="ECO:0000315"/>
    <property type="project" value="MGI"/>
</dbReference>
<dbReference type="GO" id="GO:0010751">
    <property type="term" value="P:negative regulation of nitric oxide mediated signal transduction"/>
    <property type="evidence" value="ECO:0000266"/>
    <property type="project" value="MGI"/>
</dbReference>
<dbReference type="GO" id="GO:0003151">
    <property type="term" value="P:outflow tract morphogenesis"/>
    <property type="evidence" value="ECO:0000316"/>
    <property type="project" value="MGI"/>
</dbReference>
<dbReference type="GO" id="GO:0010811">
    <property type="term" value="P:positive regulation of cell-substrate adhesion"/>
    <property type="evidence" value="ECO:0000314"/>
    <property type="project" value="MGI"/>
</dbReference>
<dbReference type="GO" id="GO:0010759">
    <property type="term" value="P:positive regulation of macrophage chemotaxis"/>
    <property type="evidence" value="ECO:0000315"/>
    <property type="project" value="BHF-UCL"/>
</dbReference>
<dbReference type="GO" id="GO:0030511">
    <property type="term" value="P:positive regulation of transforming growth factor beta receptor signaling pathway"/>
    <property type="evidence" value="ECO:0000315"/>
    <property type="project" value="BHF-UCL"/>
</dbReference>
<dbReference type="GO" id="GO:0034976">
    <property type="term" value="P:response to endoplasmic reticulum stress"/>
    <property type="evidence" value="ECO:0000315"/>
    <property type="project" value="UniProtKB"/>
</dbReference>
<dbReference type="GO" id="GO:0006986">
    <property type="term" value="P:response to unfolded protein"/>
    <property type="evidence" value="ECO:0007669"/>
    <property type="project" value="UniProtKB-KW"/>
</dbReference>
<dbReference type="CDD" id="cd00054">
    <property type="entry name" value="EGF_CA"/>
    <property type="match status" value="1"/>
</dbReference>
<dbReference type="FunFam" id="2.20.100.10:FF:000007">
    <property type="entry name" value="Thrombospondin 1"/>
    <property type="match status" value="2"/>
</dbReference>
<dbReference type="FunFam" id="2.60.120.200:FF:000009">
    <property type="entry name" value="Thrombospondin 1"/>
    <property type="match status" value="1"/>
</dbReference>
<dbReference type="FunFam" id="2.10.25.10:FF:000070">
    <property type="entry name" value="Thrombospondin 2"/>
    <property type="match status" value="1"/>
</dbReference>
<dbReference type="FunFam" id="4.10.1080.10:FF:000003">
    <property type="entry name" value="Thrombospondin 2"/>
    <property type="match status" value="1"/>
</dbReference>
<dbReference type="FunFam" id="2.10.25.10:FF:000025">
    <property type="entry name" value="Thrombospondin 3"/>
    <property type="match status" value="1"/>
</dbReference>
<dbReference type="FunFam" id="2.10.25.10:FF:000027">
    <property type="entry name" value="Thrombospondin 3"/>
    <property type="match status" value="1"/>
</dbReference>
<dbReference type="FunFam" id="4.10.1080.10:FF:000001">
    <property type="entry name" value="Thrombospondin 3"/>
    <property type="match status" value="1"/>
</dbReference>
<dbReference type="FunFam" id="2.20.100.10:FF:000115">
    <property type="entry name" value="Thrombospondin type-1 domain-containing protein 1"/>
    <property type="match status" value="1"/>
</dbReference>
<dbReference type="FunFam" id="2.60.120.200:FF:000041">
    <property type="entry name" value="thrombospondin-1"/>
    <property type="match status" value="1"/>
</dbReference>
<dbReference type="Gene3D" id="2.60.120.200">
    <property type="match status" value="2"/>
</dbReference>
<dbReference type="Gene3D" id="6.20.200.20">
    <property type="match status" value="1"/>
</dbReference>
<dbReference type="Gene3D" id="2.10.25.10">
    <property type="entry name" value="Laminin"/>
    <property type="match status" value="3"/>
</dbReference>
<dbReference type="Gene3D" id="2.20.100.10">
    <property type="entry name" value="Thrombospondin type-1 (TSP1) repeat"/>
    <property type="match status" value="3"/>
</dbReference>
<dbReference type="Gene3D" id="4.10.1080.10">
    <property type="entry name" value="TSP type-3 repeat"/>
    <property type="match status" value="2"/>
</dbReference>
<dbReference type="InterPro" id="IPR013320">
    <property type="entry name" value="ConA-like_dom_sf"/>
</dbReference>
<dbReference type="InterPro" id="IPR001881">
    <property type="entry name" value="EGF-like_Ca-bd_dom"/>
</dbReference>
<dbReference type="InterPro" id="IPR000742">
    <property type="entry name" value="EGF-like_dom"/>
</dbReference>
<dbReference type="InterPro" id="IPR001791">
    <property type="entry name" value="Laminin_G"/>
</dbReference>
<dbReference type="InterPro" id="IPR003367">
    <property type="entry name" value="Thrombospondin_3-like_rpt"/>
</dbReference>
<dbReference type="InterPro" id="IPR017897">
    <property type="entry name" value="Thrombospondin_3_rpt"/>
</dbReference>
<dbReference type="InterPro" id="IPR008859">
    <property type="entry name" value="Thrombospondin_C"/>
</dbReference>
<dbReference type="InterPro" id="IPR000884">
    <property type="entry name" value="TSP1_rpt"/>
</dbReference>
<dbReference type="InterPro" id="IPR036383">
    <property type="entry name" value="TSP1_rpt_sf"/>
</dbReference>
<dbReference type="InterPro" id="IPR028974">
    <property type="entry name" value="TSP_type-3_rpt"/>
</dbReference>
<dbReference type="InterPro" id="IPR048287">
    <property type="entry name" value="TSPN-like_N"/>
</dbReference>
<dbReference type="InterPro" id="IPR001007">
    <property type="entry name" value="VWF_dom"/>
</dbReference>
<dbReference type="PANTHER" id="PTHR10199">
    <property type="entry name" value="THROMBOSPONDIN"/>
    <property type="match status" value="1"/>
</dbReference>
<dbReference type="PANTHER" id="PTHR10199:SF78">
    <property type="entry name" value="THROMBOSPONDIN-1"/>
    <property type="match status" value="1"/>
</dbReference>
<dbReference type="Pfam" id="PF02210">
    <property type="entry name" value="Laminin_G_2"/>
    <property type="match status" value="1"/>
</dbReference>
<dbReference type="Pfam" id="PF00090">
    <property type="entry name" value="TSP_1"/>
    <property type="match status" value="3"/>
</dbReference>
<dbReference type="Pfam" id="PF02412">
    <property type="entry name" value="TSP_3"/>
    <property type="match status" value="7"/>
</dbReference>
<dbReference type="Pfam" id="PF05735">
    <property type="entry name" value="TSP_C"/>
    <property type="match status" value="1"/>
</dbReference>
<dbReference type="Pfam" id="PF00093">
    <property type="entry name" value="VWC"/>
    <property type="match status" value="1"/>
</dbReference>
<dbReference type="PRINTS" id="PR01705">
    <property type="entry name" value="TSP1REPEAT"/>
</dbReference>
<dbReference type="SMART" id="SM00181">
    <property type="entry name" value="EGF"/>
    <property type="match status" value="3"/>
</dbReference>
<dbReference type="SMART" id="SM00179">
    <property type="entry name" value="EGF_CA"/>
    <property type="match status" value="2"/>
</dbReference>
<dbReference type="SMART" id="SM00209">
    <property type="entry name" value="TSP1"/>
    <property type="match status" value="3"/>
</dbReference>
<dbReference type="SMART" id="SM00210">
    <property type="entry name" value="TSPN"/>
    <property type="match status" value="1"/>
</dbReference>
<dbReference type="SMART" id="SM00214">
    <property type="entry name" value="VWC"/>
    <property type="match status" value="1"/>
</dbReference>
<dbReference type="SUPFAM" id="SSF49899">
    <property type="entry name" value="Concanavalin A-like lectins/glucanases"/>
    <property type="match status" value="2"/>
</dbReference>
<dbReference type="SUPFAM" id="SSF57196">
    <property type="entry name" value="EGF/Laminin"/>
    <property type="match status" value="1"/>
</dbReference>
<dbReference type="SUPFAM" id="SSF57603">
    <property type="entry name" value="FnI-like domain"/>
    <property type="match status" value="1"/>
</dbReference>
<dbReference type="SUPFAM" id="SSF103647">
    <property type="entry name" value="TSP type-3 repeat"/>
    <property type="match status" value="3"/>
</dbReference>
<dbReference type="SUPFAM" id="SSF82895">
    <property type="entry name" value="TSP-1 type 1 repeat"/>
    <property type="match status" value="3"/>
</dbReference>
<dbReference type="PROSITE" id="PS01186">
    <property type="entry name" value="EGF_2"/>
    <property type="match status" value="1"/>
</dbReference>
<dbReference type="PROSITE" id="PS50026">
    <property type="entry name" value="EGF_3"/>
    <property type="match status" value="2"/>
</dbReference>
<dbReference type="PROSITE" id="PS50092">
    <property type="entry name" value="TSP1"/>
    <property type="match status" value="3"/>
</dbReference>
<dbReference type="PROSITE" id="PS51234">
    <property type="entry name" value="TSP3"/>
    <property type="match status" value="8"/>
</dbReference>
<dbReference type="PROSITE" id="PS51236">
    <property type="entry name" value="TSP_CTER"/>
    <property type="match status" value="1"/>
</dbReference>
<dbReference type="PROSITE" id="PS01208">
    <property type="entry name" value="VWFC_1"/>
    <property type="match status" value="1"/>
</dbReference>
<dbReference type="PROSITE" id="PS50184">
    <property type="entry name" value="VWFC_2"/>
    <property type="match status" value="1"/>
</dbReference>
<reference key="1">
    <citation type="journal article" date="1991" name="Genomics">
        <title>Characterization of the murine thrombospondin gene.</title>
        <authorList>
            <person name="Lawler J."/>
            <person name="Duquette M."/>
            <person name="Ferro P."/>
            <person name="Copeland N.G."/>
            <person name="Gilbert D.J."/>
            <person name="Jenkins N.A."/>
        </authorList>
    </citation>
    <scope>NUCLEOTIDE SEQUENCE [GENOMIC DNA]</scope>
</reference>
<reference key="2">
    <citation type="journal article" date="1992" name="J. Biol. Chem.">
        <title>Characterization of mouse thrombospondin 2 sequence and expression during cell growth and development.</title>
        <authorList>
            <person name="Laherty C.D."/>
            <person name="O'Rourke K."/>
            <person name="Wolf F.W."/>
            <person name="Katz R."/>
            <person name="Seldin M.F."/>
            <person name="Dixit V.M."/>
        </authorList>
    </citation>
    <scope>NUCLEOTIDE SEQUENCE [MRNA]</scope>
</reference>
<reference key="3">
    <citation type="journal article" date="1990" name="J. Biol. Chem.">
        <title>Characterization of the mouse thrombospondin gene and evaluation of the role of the first intron in human gene expression.</title>
        <authorList>
            <person name="Bornstein P."/>
            <person name="Alfi D."/>
            <person name="Devarayalu S."/>
            <person name="Framson P."/>
            <person name="Li P."/>
        </authorList>
    </citation>
    <scope>NUCLEOTIDE SEQUENCE [GENOMIC DNA] OF 1-490</scope>
</reference>
<reference key="4">
    <citation type="journal article" date="1996" name="FEBS Lett.">
        <title>Expression and initial characterization of recombinant mouse thrombospondin 1 and thrombospondin 3.</title>
        <authorList>
            <person name="Chen H."/>
            <person name="Aeschlimann D."/>
            <person name="Nowlen J."/>
            <person name="Mosher D.F."/>
        </authorList>
    </citation>
    <scope>PROTEIN SEQUENCE OF 19-37</scope>
</reference>
<reference key="5">
    <citation type="journal article" date="2008" name="Ann. Surg.">
        <title>Blockade of thrombospondin-1-CD47 interactions prevents necrosis of full thickness skin grafts.</title>
        <authorList>
            <person name="Isenberg J.S."/>
            <person name="Pappan L.K."/>
            <person name="Romeo M.J."/>
            <person name="Abu-Asab M."/>
            <person name="Tsokos M."/>
            <person name="Wink D.A."/>
            <person name="Frazier W.A."/>
            <person name="Roberts D.D."/>
        </authorList>
    </citation>
    <scope>FUNCTION</scope>
    <scope>DISRUPTION PHENOTYPE</scope>
</reference>
<reference key="6">
    <citation type="journal article" date="2009" name="Mol. Cell. Proteomics">
        <title>The mouse C2C12 myoblast cell surface N-linked glycoproteome: identification, glycosite occupancy, and membrane orientation.</title>
        <authorList>
            <person name="Gundry R.L."/>
            <person name="Raginski K."/>
            <person name="Tarasova Y."/>
            <person name="Tchernyshyov I."/>
            <person name="Bausch-Fluck D."/>
            <person name="Elliott S.T."/>
            <person name="Boheler K.R."/>
            <person name="Van Eyk J.E."/>
            <person name="Wollscheid B."/>
        </authorList>
    </citation>
    <scope>GLYCOSYLATION [LARGE SCALE ANALYSIS] AT ASN-1067</scope>
    <source>
        <tissue>Myoblast</tissue>
    </source>
</reference>
<reference key="7">
    <citation type="journal article" date="2010" name="Cell">
        <title>A tissue-specific atlas of mouse protein phosphorylation and expression.</title>
        <authorList>
            <person name="Huttlin E.L."/>
            <person name="Jedrychowski M.P."/>
            <person name="Elias J.E."/>
            <person name="Goswami T."/>
            <person name="Rad R."/>
            <person name="Beausoleil S.A."/>
            <person name="Villen J."/>
            <person name="Haas W."/>
            <person name="Sowa M.E."/>
            <person name="Gygi S.P."/>
        </authorList>
    </citation>
    <scope>IDENTIFICATION BY MASS SPECTROMETRY [LARGE SCALE ANALYSIS]</scope>
    <source>
        <tissue>Brown adipose tissue</tissue>
        <tissue>Heart</tissue>
        <tissue>Kidney</tissue>
        <tissue>Liver</tissue>
        <tissue>Lung</tissue>
        <tissue>Spleen</tissue>
    </source>
</reference>
<reference key="8">
    <citation type="journal article" date="2010" name="Cardiovasc. Res.">
        <title>Thrombospondin-1 supports blood pressure by limiting eNOS activation and endothelial-dependent vasorelaxation.</title>
        <authorList>
            <person name="Bauer E.M."/>
            <person name="Qin Y."/>
            <person name="Miller T.W."/>
            <person name="Bandle R.W."/>
            <person name="Csanyi G."/>
            <person name="Pagano P.J."/>
            <person name="Bauer P.M."/>
            <person name="Schnermann J."/>
            <person name="Roberts D.D."/>
            <person name="Isenberg J.S."/>
        </authorList>
    </citation>
    <scope>FUNCTION</scope>
    <scope>DISRUPTION PHENOTYPE</scope>
</reference>
<reference key="9">
    <citation type="journal article" date="2012" name="Cell">
        <title>A thrombospondin-dependent pathway for a protective ER stress response.</title>
        <authorList>
            <person name="Lynch J.M."/>
            <person name="Maillet M."/>
            <person name="Vanhoutte D."/>
            <person name="Schloemer A."/>
            <person name="Sargent M.A."/>
            <person name="Blair N.S."/>
            <person name="Lynch K.A."/>
            <person name="Okada T."/>
            <person name="Aronow B.J."/>
            <person name="Osinska H."/>
            <person name="Prywes R."/>
            <person name="Lorenz J.N."/>
            <person name="Mori K."/>
            <person name="Lawler J."/>
            <person name="Robbins J."/>
            <person name="Molkentin J.D."/>
        </authorList>
    </citation>
    <scope>FUNCTION</scope>
    <scope>SUBCELLULAR LOCATION</scope>
    <scope>INTERACTION WITH ATF6</scope>
</reference>
<reference key="10">
    <citation type="journal article" date="2013" name="Am. J. Physiol.">
        <title>Thrombospondin-1 regulates adiposity and metabolic dysfunction in diet-induced obesity enhancing adipose inflammation and stimulating adipocyte proliferation.</title>
        <authorList>
            <person name="Kong P."/>
            <person name="Gonzalez-Quesada C."/>
            <person name="Li N."/>
            <person name="Cavalera M."/>
            <person name="Lee D.W."/>
            <person name="Frangogiannis N.G."/>
        </authorList>
    </citation>
    <scope>FUNCTION</scope>
    <scope>INDUCTION</scope>
    <scope>DISRUPTION PHENOTYPE</scope>
</reference>
<reference key="11">
    <citation type="journal article" date="2013" name="Sci. Rep.">
        <title>Thrombospondin-1 signaling through CD47 inhibits self-renewal by regulating c-Myc and other stem cell transcription factors.</title>
        <authorList>
            <person name="Kaur S."/>
            <person name="Soto-Pantoja D.R."/>
            <person name="Stein E.V."/>
            <person name="Liu C."/>
            <person name="Elkahloun A.G."/>
            <person name="Pendrak M.L."/>
            <person name="Nicolae A."/>
            <person name="Singh S.P."/>
            <person name="Nie Z."/>
            <person name="Levens D."/>
            <person name="Isenberg J.S."/>
            <person name="Roberts D.D."/>
        </authorList>
    </citation>
    <scope>FUNCTION</scope>
</reference>
<reference key="12">
    <citation type="journal article" date="2015" name="Biochim. Biophys. Acta">
        <title>Interaction of thrombospondin1 and CD36 contributes to obesity-associated podocytopathy.</title>
        <authorList>
            <person name="Cui W."/>
            <person name="Maimaitiyiming H."/>
            <person name="Zhou Q."/>
            <person name="Norman H."/>
            <person name="Zhou C."/>
            <person name="Wang S."/>
        </authorList>
    </citation>
    <scope>FUNCTION</scope>
    <scope>INDUCTION</scope>
    <scope>DISRUPTION PHENOTYPE</scope>
</reference>
<reference key="13">
    <citation type="journal article" date="2017" name="Cardiovasc. Res.">
        <title>TSP1-CD47 signaling is upregulated in clinical pulmonary hypertension and contributes to pulmonary arterial vasculopathy and dysfunction.</title>
        <authorList>
            <person name="Rogers N.M."/>
            <person name="Sharifi-Sanjani M."/>
            <person name="Yao M."/>
            <person name="Ghimire K."/>
            <person name="Bienes-Martinez R."/>
            <person name="Mutchler S.M."/>
            <person name="Knupp H.E."/>
            <person name="Baust J."/>
            <person name="Novelli E.M."/>
            <person name="Ross M."/>
            <person name="St Croix C."/>
            <person name="Kutten J.C."/>
            <person name="Czajka C.A."/>
            <person name="Sembrat J.C."/>
            <person name="Rojas M."/>
            <person name="Labrousse-Arias D."/>
            <person name="Bachman T.N."/>
            <person name="Vanderpool R.R."/>
            <person name="Zuckerbraun B.S."/>
            <person name="Champion H.C."/>
            <person name="Mora A.L."/>
            <person name="Straub A.C."/>
            <person name="Bilonick R.A."/>
            <person name="Calzada M.J."/>
            <person name="Isenberg J.S."/>
        </authorList>
    </citation>
    <scope>INDUCTION</scope>
</reference>
<reference key="14">
    <citation type="journal article" date="2017" name="Sci. Signal.">
        <title>The matricellular protein TSP1 promotes human and mouse endothelial cell senescence through CD47 and Nox1.</title>
        <authorList>
            <person name="Meijles D.N."/>
            <person name="Sahoo S."/>
            <person name="Al Ghouleh I."/>
            <person name="Amaral J.H."/>
            <person name="Bienes-Martinez R."/>
            <person name="Knupp H.E."/>
            <person name="Attaran S."/>
            <person name="Sembrat J.C."/>
            <person name="Nouraie S.M."/>
            <person name="Rojas M.M."/>
            <person name="Novelli E.M."/>
            <person name="Gladwin M.T."/>
            <person name="Isenberg J.S."/>
            <person name="Cifuentes-Pagano E."/>
            <person name="Pagano P.J."/>
        </authorList>
    </citation>
    <scope>FUNCTION</scope>
    <scope>INDUCTION</scope>
    <scope>DISRUPTION PHENOTYPE</scope>
</reference>
<reference key="15">
    <citation type="journal article" date="2020" name="Cells">
        <title>CD47 Promotes Age-Associated Deterioration in Angiogenesis, Blood Flow and Glucose Homeostasis.</title>
        <authorList>
            <person name="Ghimire K."/>
            <person name="Li Y."/>
            <person name="Chiba T."/>
            <person name="Julovi S.M."/>
            <person name="Li J."/>
            <person name="Ross M.A."/>
            <person name="Straub A.C."/>
            <person name="O'Connell P.J."/>
            <person name="Rueegg C."/>
            <person name="Pagano P.J."/>
            <person name="Isenberg J.S."/>
            <person name="Rogers N.M."/>
        </authorList>
    </citation>
    <scope>FUNCTION</scope>
    <scope>INDUCTION</scope>
</reference>
<comment type="function">
    <text evidence="2 9 11 12 13 14 15 17 18">Adhesive glycoprotein that mediates cell-to-cell and cell-to-matrix interactions (By similarity). Multifunctional, involved in inflammation, angiogenesis, wound healing, reactive oxygen species (ROS) signaling, nitrous oxide (NO) signaling, apoptosis, senescence, aging, cellular self-renewal, stemness, and cardiovascular and metabolic homeostasis (By similarity). Negatively modulates dendritic cell activation and cytokine release, as part of an autocrine feedback loop, contributing to the resolution of inflammation and immune homeostasis (By similarity). Ligand for receptor CD47 (By similarity). Modulates nitrous oxide (NO) signaling via CD47, hence playing a role as a pressor agent, supporting blood pressure (PubMed:20610415). Plays a role in endothelial cell senescence, acting via CD47, by increasing the abundance and activation of NADPH oxidase NOX1, and so generating excess ROS (PubMed:29042481). Inhibits stem cell self-renewal, acting via CD47 signaling, probably by regulation of the stem cell transcription factors POU5F1/OCT4, SOX2, MYC/c-Myc and KLF4 (PubMed:23591719). Negatively modulates wound healing, acting via CD47 (PubMed:18156939). Ligand for receptor CD36 (By similarity). Involved in inducing apoptosis in podocytes in response to elevated free fatty acids, acting via CD36 (PubMed:25835637). Plays a role in suppressing angiogenesis, acting, depending on context, via CD36 or CD47 (By similarity). Promotes cellular senescence in a TP53-CDKN1A-RB1 signaling-dependent manner (PubMed:29042481). Ligand for immunoglobulin-like cell surface receptor SIRPA (By similarity). Involved in ROS signaling in non-phagocytic cells, stimulating NADPH oxidase-derived ROS production, acting via interaction with SIRPA (By similarity). Plays a role in metabolic dysfunction in diet-induced obesity, perhaps acting by exacerbating adipose inflammatory activity; its effects may be mediated, at least in part, through enhanced adipocyte proliferation (PubMed:23757408). Plays a role in ER stress response, via its interaction with the activating transcription factor 6 alpha (ATF6) which produces adaptive ER stress response factors (PubMed:22682248). May be involved in age-related conditions, including metabolic dysregulation, during normal aging (PubMed:29042481, PubMed:32679764).</text>
</comment>
<comment type="subunit">
    <text evidence="2 12">Homotrimer; disulfide-linked (By similarity). Can bind to fibrinogen, fibronectin, laminin, type V collagen and integrins alpha-V/beta-1, alpha-V/beta-3 and alpha-IIb/beta-3 (By similarity). Binds heparin (By similarity). Interacts (via the C-terminal domain) with CD47 (By similarity). Interacts (via the TSP type I repeats) with CD36; the interaction conveys an antiangiogenic effect (By similarity). Interacts (via the TSP type I repeats) with HRG; the interaction blocks the antiangiogenic effect of THBS1 with CD36 (By similarity). Interacts with ATF6 (via lumenal domain) (PubMed:22682248). Interacts with FN1; this interaction is enhanced by TNFAIP6, which may act as a bridging molecule between FN1 and THBS1 (By similarity). Interacts with SIRPA; the interaction stimulates phosphorylation of SIRPA (By similarity).</text>
</comment>
<comment type="subcellular location">
    <subcellularLocation>
        <location evidence="2">Secreted</location>
    </subcellularLocation>
    <subcellularLocation>
        <location evidence="2">Cell surface</location>
    </subcellularLocation>
    <subcellularLocation>
        <location evidence="2">Secreted</location>
        <location evidence="2">Extracellular space</location>
        <location evidence="2">Extracellular matrix</location>
    </subcellularLocation>
    <subcellularLocation>
        <location evidence="12">Endoplasmic reticulum</location>
    </subcellularLocation>
    <subcellularLocation>
        <location evidence="12">Sarcoplasmic reticulum</location>
    </subcellularLocation>
    <text evidence="2 12">Secreted by thrombin-activated platelets and binds to the cell surface in the presence of extracellular Ca(2+) (By similarity). Incorporated into the extracellular matrix (ECM) of fibroblasts (By similarity). The C-terminal region in trimeric form is required for retention in the ECM (By similarity). Also detected in the endoplasmic reticulum and sarcoplasmic reticulum where it plays a role in the ER stress response (PubMed:22682248).</text>
</comment>
<comment type="induction">
    <text evidence="14 15 16 17 18">Expression increases in lungs following short-term hypoxia (PubMed:27742621). Expression increases in kidney podocytes in response to elevated free fatty acids (PubMed:25835637). Expression in vasculature, including arteries, increases in normal aging (PubMed:29042481, PubMed:32679764). Expression increases in adipose tissue in diet-induced obesity (PubMed:23757408).</text>
</comment>
<comment type="disruption phenotype">
    <text evidence="9 11 14 15 17">Knockout enhances eNOS-dependent arterial relaxation in blood vessels (PubMed:20610415). Treating the endothelial lining with THBS1 inhibits ACh-stimulated vasorelaxation (PubMed:20610415). Mean arterial pressure (MAP) is significantly decreased following ACh treatment (PubMed:20610415). Enhanced survival of full-thickness skin grafts, with increased numbers of functional vessels in wound beds (PubMed:18156939). Significant increase in proliferating cell nuclear antigen (PCNA) in middle-aged (8- to 10-month-old) lungs (PubMed:29042481). Increases in abundance of other senescence-associated markers in middle-aged lungs, including TP53/p53 and CDKN1A/p21cip, decrease in RB1, and no change in CDKN2A/p16INK4A (PubMed:29042481). Reduces weight gain in animals fed on a high-carbohydrate and low-fat diet (HCLFD), or a high-fat diet (HFD); mainly due to reduced adiposity, and yet does not affect food intake and energy expenditure (PubMed:23757408). Insulin level and estimated insulin resistance are both reduced on either HFD or HCLFD, and free fatty-acids (FFA) and triglyceride levels are both increased (PubMed:23757408). Plasma leptin levels are reduced in animals fed the HCLFD but not in animals fed the HFD (PubMed:23757408). No significant difference in adipocyte size, nor vascular density in adipose tissue (PubMed:23757408). Reduced macrophage infiltration in adipose tissue in animals fed HCLFD (PubMed:23757408). Reduced mRNA expression levels of TNF-alpha, type I collagen COL1A1, and TGF-beta 1 in adipose tissue in animals fed HCLFD (PubMed:23757408). Markers of podocyte function, such as WT1, nephrin and synaptopodin are decreased in obese wild type, but these changes are attenuated in obese knockout animals (PubMed:25835637). Fewer apoptotic cells and reduced levels of active caspase 3 in glomeruli (PubMed:25835637).</text>
</comment>
<comment type="similarity">
    <text evidence="20">Belongs to the thrombospondin family.</text>
</comment>